<organism>
    <name type="scientific">Staphylococcus aureus (strain MRSA252)</name>
    <dbReference type="NCBI Taxonomy" id="282458"/>
    <lineage>
        <taxon>Bacteria</taxon>
        <taxon>Bacillati</taxon>
        <taxon>Bacillota</taxon>
        <taxon>Bacilli</taxon>
        <taxon>Bacillales</taxon>
        <taxon>Staphylococcaceae</taxon>
        <taxon>Staphylococcus</taxon>
    </lineage>
</organism>
<comment type="function">
    <text evidence="1">Plays a major role in protein secretion by helping the post-translocational extracellular folding of several secreted proteins.</text>
</comment>
<comment type="catalytic activity">
    <reaction evidence="1">
        <text>[protein]-peptidylproline (omega=180) = [protein]-peptidylproline (omega=0)</text>
        <dbReference type="Rhea" id="RHEA:16237"/>
        <dbReference type="Rhea" id="RHEA-COMP:10747"/>
        <dbReference type="Rhea" id="RHEA-COMP:10748"/>
        <dbReference type="ChEBI" id="CHEBI:83833"/>
        <dbReference type="ChEBI" id="CHEBI:83834"/>
        <dbReference type="EC" id="5.2.1.8"/>
    </reaction>
</comment>
<comment type="subcellular location">
    <subcellularLocation>
        <location evidence="1">Cell membrane</location>
        <topology evidence="1">Lipid-anchor</topology>
    </subcellularLocation>
</comment>
<comment type="similarity">
    <text evidence="1">Belongs to the PrsA family.</text>
</comment>
<name>PRSA_STAAR</name>
<dbReference type="EC" id="5.2.1.8" evidence="1"/>
<dbReference type="EMBL" id="BX571856">
    <property type="protein sequence ID" value="CAG40919.1"/>
    <property type="molecule type" value="Genomic_DNA"/>
</dbReference>
<dbReference type="RefSeq" id="WP_000782130.1">
    <property type="nucleotide sequence ID" value="NC_002952.2"/>
</dbReference>
<dbReference type="SMR" id="Q6GFL5"/>
<dbReference type="KEGG" id="sar:SAR1932"/>
<dbReference type="HOGENOM" id="CLU_034646_6_2_9"/>
<dbReference type="Proteomes" id="UP000000596">
    <property type="component" value="Chromosome"/>
</dbReference>
<dbReference type="GO" id="GO:0005886">
    <property type="term" value="C:plasma membrane"/>
    <property type="evidence" value="ECO:0007669"/>
    <property type="project" value="UniProtKB-SubCell"/>
</dbReference>
<dbReference type="GO" id="GO:0003755">
    <property type="term" value="F:peptidyl-prolyl cis-trans isomerase activity"/>
    <property type="evidence" value="ECO:0007669"/>
    <property type="project" value="UniProtKB-UniRule"/>
</dbReference>
<dbReference type="GO" id="GO:0006457">
    <property type="term" value="P:protein folding"/>
    <property type="evidence" value="ECO:0007669"/>
    <property type="project" value="UniProtKB-UniRule"/>
</dbReference>
<dbReference type="Gene3D" id="3.10.50.40">
    <property type="match status" value="1"/>
</dbReference>
<dbReference type="Gene3D" id="1.10.4030.10">
    <property type="entry name" value="Porin chaperone SurA, peptide-binding domain"/>
    <property type="match status" value="1"/>
</dbReference>
<dbReference type="HAMAP" id="MF_01145">
    <property type="entry name" value="Foldase_PrsA"/>
    <property type="match status" value="1"/>
</dbReference>
<dbReference type="InterPro" id="IPR023059">
    <property type="entry name" value="Foldase_PrsA"/>
</dbReference>
<dbReference type="InterPro" id="IPR046357">
    <property type="entry name" value="PPIase_dom_sf"/>
</dbReference>
<dbReference type="InterPro" id="IPR000297">
    <property type="entry name" value="PPIase_PpiC"/>
</dbReference>
<dbReference type="InterPro" id="IPR050245">
    <property type="entry name" value="PrsA_foldase"/>
</dbReference>
<dbReference type="InterPro" id="IPR027304">
    <property type="entry name" value="Trigger_fact/SurA_dom_sf"/>
</dbReference>
<dbReference type="PANTHER" id="PTHR47245:SF1">
    <property type="entry name" value="FOLDASE PROTEIN PRSA"/>
    <property type="match status" value="1"/>
</dbReference>
<dbReference type="PANTHER" id="PTHR47245">
    <property type="entry name" value="PEPTIDYLPROLYL ISOMERASE"/>
    <property type="match status" value="1"/>
</dbReference>
<dbReference type="Pfam" id="PF00639">
    <property type="entry name" value="Rotamase"/>
    <property type="match status" value="1"/>
</dbReference>
<dbReference type="SUPFAM" id="SSF54534">
    <property type="entry name" value="FKBP-like"/>
    <property type="match status" value="1"/>
</dbReference>
<dbReference type="SUPFAM" id="SSF109998">
    <property type="entry name" value="Triger factor/SurA peptide-binding domain-like"/>
    <property type="match status" value="1"/>
</dbReference>
<dbReference type="PROSITE" id="PS50198">
    <property type="entry name" value="PPIC_PPIASE_2"/>
    <property type="match status" value="1"/>
</dbReference>
<dbReference type="PROSITE" id="PS51257">
    <property type="entry name" value="PROKAR_LIPOPROTEIN"/>
    <property type="match status" value="1"/>
</dbReference>
<accession>Q6GFL5</accession>
<protein>
    <recommendedName>
        <fullName evidence="1">Foldase protein PrsA</fullName>
        <ecNumber evidence="1">5.2.1.8</ecNumber>
    </recommendedName>
</protein>
<feature type="signal peptide" evidence="1">
    <location>
        <begin position="1"/>
        <end position="20"/>
    </location>
</feature>
<feature type="chain" id="PRO_0000029320" description="Foldase protein PrsA">
    <location>
        <begin position="21"/>
        <end position="320"/>
    </location>
</feature>
<feature type="domain" description="PpiC" evidence="1">
    <location>
        <begin position="139"/>
        <end position="245"/>
    </location>
</feature>
<feature type="region of interest" description="Disordered" evidence="2">
    <location>
        <begin position="159"/>
        <end position="198"/>
    </location>
</feature>
<feature type="lipid moiety-binding region" description="N-palmitoyl cysteine" evidence="1">
    <location>
        <position position="21"/>
    </location>
</feature>
<feature type="lipid moiety-binding region" description="S-diacylglycerol cysteine" evidence="1">
    <location>
        <position position="21"/>
    </location>
</feature>
<evidence type="ECO:0000255" key="1">
    <source>
        <dbReference type="HAMAP-Rule" id="MF_01145"/>
    </source>
</evidence>
<evidence type="ECO:0000256" key="2">
    <source>
        <dbReference type="SAM" id="MobiDB-lite"/>
    </source>
</evidence>
<reference key="1">
    <citation type="journal article" date="2004" name="Proc. Natl. Acad. Sci. U.S.A.">
        <title>Complete genomes of two clinical Staphylococcus aureus strains: evidence for the rapid evolution of virulence and drug resistance.</title>
        <authorList>
            <person name="Holden M.T.G."/>
            <person name="Feil E.J."/>
            <person name="Lindsay J.A."/>
            <person name="Peacock S.J."/>
            <person name="Day N.P.J."/>
            <person name="Enright M.C."/>
            <person name="Foster T.J."/>
            <person name="Moore C.E."/>
            <person name="Hurst L."/>
            <person name="Atkin R."/>
            <person name="Barron A."/>
            <person name="Bason N."/>
            <person name="Bentley S.D."/>
            <person name="Chillingworth C."/>
            <person name="Chillingworth T."/>
            <person name="Churcher C."/>
            <person name="Clark L."/>
            <person name="Corton C."/>
            <person name="Cronin A."/>
            <person name="Doggett J."/>
            <person name="Dowd L."/>
            <person name="Feltwell T."/>
            <person name="Hance Z."/>
            <person name="Harris B."/>
            <person name="Hauser H."/>
            <person name="Holroyd S."/>
            <person name="Jagels K."/>
            <person name="James K.D."/>
            <person name="Lennard N."/>
            <person name="Line A."/>
            <person name="Mayes R."/>
            <person name="Moule S."/>
            <person name="Mungall K."/>
            <person name="Ormond D."/>
            <person name="Quail M.A."/>
            <person name="Rabbinowitsch E."/>
            <person name="Rutherford K.M."/>
            <person name="Sanders M."/>
            <person name="Sharp S."/>
            <person name="Simmonds M."/>
            <person name="Stevens K."/>
            <person name="Whitehead S."/>
            <person name="Barrell B.G."/>
            <person name="Spratt B.G."/>
            <person name="Parkhill J."/>
        </authorList>
    </citation>
    <scope>NUCLEOTIDE SEQUENCE [LARGE SCALE GENOMIC DNA]</scope>
    <source>
        <strain>MRSA252</strain>
    </source>
</reference>
<sequence>MKMINKLIVPVTASALLLGACGASATDSKENTLISSKAGDVTVADTMKKIGKDQIANASFTEMLNKILADKYKNKVNDKKIDEQIEKMQKQYGGKDKFKKALQQQGLTADKYKENLRTAAYHKELLSDKIKISDSEIKEDSKKASHILIKVKSKKSDKEGLDDKEAKQKAEEIQKEVSKDPSKFGEIAKKESMDTGSAKKDGELGYVLKGQTDKDFEKALFKLKDGEVSDVVKSSFGYHIIKADKPTDFNSEKQSLKEKLVDQKVQKNPKLLTDAYKDLLKEYDVDFKDRDIKSVVEDKILNPEKLKQGGAQGGQSGMSQ</sequence>
<gene>
    <name evidence="1" type="primary">prsA</name>
    <name type="ordered locus">SAR1932</name>
</gene>
<proteinExistence type="inferred from homology"/>
<keyword id="KW-1003">Cell membrane</keyword>
<keyword id="KW-0413">Isomerase</keyword>
<keyword id="KW-0449">Lipoprotein</keyword>
<keyword id="KW-0472">Membrane</keyword>
<keyword id="KW-0564">Palmitate</keyword>
<keyword id="KW-0697">Rotamase</keyword>
<keyword id="KW-0732">Signal</keyword>